<comment type="function">
    <text evidence="1">Involved in the gluconeogenesis. Catalyzes stereospecifically the conversion of dihydroxyacetone phosphate (DHAP) to D-glyceraldehyde-3-phosphate (G3P).</text>
</comment>
<comment type="catalytic activity">
    <reaction evidence="1">
        <text>D-glyceraldehyde 3-phosphate = dihydroxyacetone phosphate</text>
        <dbReference type="Rhea" id="RHEA:18585"/>
        <dbReference type="ChEBI" id="CHEBI:57642"/>
        <dbReference type="ChEBI" id="CHEBI:59776"/>
        <dbReference type="EC" id="5.3.1.1"/>
    </reaction>
</comment>
<comment type="pathway">
    <text evidence="1">Carbohydrate biosynthesis; gluconeogenesis.</text>
</comment>
<comment type="pathway">
    <text evidence="1">Carbohydrate degradation; glycolysis; D-glyceraldehyde 3-phosphate from glycerone phosphate: step 1/1.</text>
</comment>
<comment type="subunit">
    <text evidence="1">Homodimer.</text>
</comment>
<comment type="subcellular location">
    <subcellularLocation>
        <location evidence="1">Cytoplasm</location>
    </subcellularLocation>
</comment>
<comment type="similarity">
    <text evidence="1">Belongs to the triosephosphate isomerase family.</text>
</comment>
<proteinExistence type="inferred from homology"/>
<name>TPIS_CHLPM</name>
<feature type="chain" id="PRO_1000076655" description="Triosephosphate isomerase">
    <location>
        <begin position="1"/>
        <end position="250"/>
    </location>
</feature>
<feature type="active site" description="Electrophile" evidence="1">
    <location>
        <position position="96"/>
    </location>
</feature>
<feature type="active site" description="Proton acceptor" evidence="1">
    <location>
        <position position="166"/>
    </location>
</feature>
<feature type="binding site" evidence="1">
    <location>
        <begin position="9"/>
        <end position="11"/>
    </location>
    <ligand>
        <name>substrate</name>
    </ligand>
</feature>
<feature type="binding site" evidence="1">
    <location>
        <position position="172"/>
    </location>
    <ligand>
        <name>substrate</name>
    </ligand>
</feature>
<feature type="binding site" evidence="1">
    <location>
        <position position="212"/>
    </location>
    <ligand>
        <name>substrate</name>
    </ligand>
</feature>
<feature type="binding site" evidence="1">
    <location>
        <begin position="233"/>
        <end position="234"/>
    </location>
    <ligand>
        <name>substrate</name>
    </ligand>
</feature>
<accession>A4SFM8</accession>
<sequence length="250" mass="26086">MRRKIVVGNWKMNKTVAESTELASAVVAALGSDCSACEAGIAPTYPALDSVGRTIKGSEVLLVAQNCHYEDDGAFTGEVSTGMLNALGCSYVIIGHSERRQYFGETDATVNLRIKKVLAAGMKAILCVGETLEERESGAFEAVVSTQVTGGLQGVVDISDIVIAYEPVWAIGTGRTASSEQAQEVHKIIRNKVAELYGAPAADAVRIQYGGSVKPSNAAELFAMPDIDGGLIGGAALKAEDFAAIVKAAC</sequence>
<organism>
    <name type="scientific">Chlorobium phaeovibrioides (strain DSM 265 / 1930)</name>
    <name type="common">Prosthecochloris vibrioformis (strain DSM 265)</name>
    <dbReference type="NCBI Taxonomy" id="290318"/>
    <lineage>
        <taxon>Bacteria</taxon>
        <taxon>Pseudomonadati</taxon>
        <taxon>Chlorobiota</taxon>
        <taxon>Chlorobiia</taxon>
        <taxon>Chlorobiales</taxon>
        <taxon>Chlorobiaceae</taxon>
        <taxon>Chlorobium/Pelodictyon group</taxon>
        <taxon>Chlorobium</taxon>
    </lineage>
</organism>
<evidence type="ECO:0000255" key="1">
    <source>
        <dbReference type="HAMAP-Rule" id="MF_00147"/>
    </source>
</evidence>
<protein>
    <recommendedName>
        <fullName evidence="1">Triosephosphate isomerase</fullName>
        <shortName evidence="1">TIM</shortName>
        <shortName evidence="1">TPI</shortName>
        <ecNumber evidence="1">5.3.1.1</ecNumber>
    </recommendedName>
    <alternativeName>
        <fullName evidence="1">Triose-phosphate isomerase</fullName>
    </alternativeName>
</protein>
<dbReference type="EC" id="5.3.1.1" evidence="1"/>
<dbReference type="EMBL" id="CP000607">
    <property type="protein sequence ID" value="ABP37287.1"/>
    <property type="molecule type" value="Genomic_DNA"/>
</dbReference>
<dbReference type="SMR" id="A4SFM8"/>
<dbReference type="STRING" id="290318.Cvib_1275"/>
<dbReference type="KEGG" id="pvi:Cvib_1275"/>
<dbReference type="eggNOG" id="COG0149">
    <property type="taxonomic scope" value="Bacteria"/>
</dbReference>
<dbReference type="HOGENOM" id="CLU_024251_2_3_10"/>
<dbReference type="OrthoDB" id="9809429at2"/>
<dbReference type="UniPathway" id="UPA00109">
    <property type="reaction ID" value="UER00189"/>
</dbReference>
<dbReference type="UniPathway" id="UPA00138"/>
<dbReference type="GO" id="GO:0005829">
    <property type="term" value="C:cytosol"/>
    <property type="evidence" value="ECO:0007669"/>
    <property type="project" value="TreeGrafter"/>
</dbReference>
<dbReference type="GO" id="GO:0004807">
    <property type="term" value="F:triose-phosphate isomerase activity"/>
    <property type="evidence" value="ECO:0007669"/>
    <property type="project" value="UniProtKB-UniRule"/>
</dbReference>
<dbReference type="GO" id="GO:0006094">
    <property type="term" value="P:gluconeogenesis"/>
    <property type="evidence" value="ECO:0007669"/>
    <property type="project" value="UniProtKB-UniRule"/>
</dbReference>
<dbReference type="GO" id="GO:0046166">
    <property type="term" value="P:glyceraldehyde-3-phosphate biosynthetic process"/>
    <property type="evidence" value="ECO:0007669"/>
    <property type="project" value="TreeGrafter"/>
</dbReference>
<dbReference type="GO" id="GO:0019563">
    <property type="term" value="P:glycerol catabolic process"/>
    <property type="evidence" value="ECO:0007669"/>
    <property type="project" value="TreeGrafter"/>
</dbReference>
<dbReference type="GO" id="GO:0006096">
    <property type="term" value="P:glycolytic process"/>
    <property type="evidence" value="ECO:0007669"/>
    <property type="project" value="UniProtKB-UniRule"/>
</dbReference>
<dbReference type="CDD" id="cd00311">
    <property type="entry name" value="TIM"/>
    <property type="match status" value="1"/>
</dbReference>
<dbReference type="FunFam" id="3.20.20.70:FF:000016">
    <property type="entry name" value="Triosephosphate isomerase"/>
    <property type="match status" value="1"/>
</dbReference>
<dbReference type="Gene3D" id="3.20.20.70">
    <property type="entry name" value="Aldolase class I"/>
    <property type="match status" value="1"/>
</dbReference>
<dbReference type="HAMAP" id="MF_00147_B">
    <property type="entry name" value="TIM_B"/>
    <property type="match status" value="1"/>
</dbReference>
<dbReference type="InterPro" id="IPR013785">
    <property type="entry name" value="Aldolase_TIM"/>
</dbReference>
<dbReference type="InterPro" id="IPR035990">
    <property type="entry name" value="TIM_sf"/>
</dbReference>
<dbReference type="InterPro" id="IPR022896">
    <property type="entry name" value="TrioseP_Isoase_bac/euk"/>
</dbReference>
<dbReference type="InterPro" id="IPR000652">
    <property type="entry name" value="Triosephosphate_isomerase"/>
</dbReference>
<dbReference type="InterPro" id="IPR020861">
    <property type="entry name" value="Triosephosphate_isomerase_AS"/>
</dbReference>
<dbReference type="NCBIfam" id="TIGR00419">
    <property type="entry name" value="tim"/>
    <property type="match status" value="1"/>
</dbReference>
<dbReference type="PANTHER" id="PTHR21139">
    <property type="entry name" value="TRIOSEPHOSPHATE ISOMERASE"/>
    <property type="match status" value="1"/>
</dbReference>
<dbReference type="PANTHER" id="PTHR21139:SF42">
    <property type="entry name" value="TRIOSEPHOSPHATE ISOMERASE"/>
    <property type="match status" value="1"/>
</dbReference>
<dbReference type="Pfam" id="PF00121">
    <property type="entry name" value="TIM"/>
    <property type="match status" value="1"/>
</dbReference>
<dbReference type="SUPFAM" id="SSF51351">
    <property type="entry name" value="Triosephosphate isomerase (TIM)"/>
    <property type="match status" value="1"/>
</dbReference>
<dbReference type="PROSITE" id="PS00171">
    <property type="entry name" value="TIM_1"/>
    <property type="match status" value="1"/>
</dbReference>
<dbReference type="PROSITE" id="PS51440">
    <property type="entry name" value="TIM_2"/>
    <property type="match status" value="1"/>
</dbReference>
<gene>
    <name evidence="1" type="primary">tpiA</name>
    <name type="ordered locus">Cvib_1275</name>
</gene>
<reference key="1">
    <citation type="submission" date="2007-03" db="EMBL/GenBank/DDBJ databases">
        <title>Complete sequence of Prosthecochloris vibrioformis DSM 265.</title>
        <authorList>
            <consortium name="US DOE Joint Genome Institute"/>
            <person name="Copeland A."/>
            <person name="Lucas S."/>
            <person name="Lapidus A."/>
            <person name="Barry K."/>
            <person name="Detter J.C."/>
            <person name="Glavina del Rio T."/>
            <person name="Hammon N."/>
            <person name="Israni S."/>
            <person name="Pitluck S."/>
            <person name="Schmutz J."/>
            <person name="Larimer F."/>
            <person name="Land M."/>
            <person name="Hauser L."/>
            <person name="Mikhailova N."/>
            <person name="Li T."/>
            <person name="Overmann J."/>
            <person name="Schuster S.C."/>
            <person name="Bryant D.A."/>
            <person name="Richardson P."/>
        </authorList>
    </citation>
    <scope>NUCLEOTIDE SEQUENCE [LARGE SCALE GENOMIC DNA]</scope>
    <source>
        <strain>DSM 265 / 1930</strain>
    </source>
</reference>
<keyword id="KW-0963">Cytoplasm</keyword>
<keyword id="KW-0312">Gluconeogenesis</keyword>
<keyword id="KW-0324">Glycolysis</keyword>
<keyword id="KW-0413">Isomerase</keyword>